<name>HMCS1_PONAB</name>
<protein>
    <recommendedName>
        <fullName evidence="3">Hydroxymethylglutaryl-CoA synthase, cytoplasmic</fullName>
        <shortName evidence="3">HMG-CoA synthase</shortName>
        <ecNumber evidence="3">2.3.3.10</ecNumber>
    </recommendedName>
    <alternativeName>
        <fullName>3-hydroxy-3-methylglutaryl coenzyme A synthase</fullName>
    </alternativeName>
</protein>
<dbReference type="EC" id="2.3.3.10" evidence="3"/>
<dbReference type="EMBL" id="CR859957">
    <property type="protein sequence ID" value="CAH92111.1"/>
    <property type="molecule type" value="mRNA"/>
</dbReference>
<dbReference type="RefSeq" id="NP_001127508.1">
    <property type="nucleotide sequence ID" value="NM_001134036.1"/>
</dbReference>
<dbReference type="RefSeq" id="XP_009238962.1">
    <property type="nucleotide sequence ID" value="XM_009240687.4"/>
</dbReference>
<dbReference type="SMR" id="Q5R7Z9"/>
<dbReference type="FunCoup" id="Q5R7Z9">
    <property type="interactions" value="1816"/>
</dbReference>
<dbReference type="STRING" id="9601.ENSPPYP00000017251"/>
<dbReference type="Ensembl" id="ENSPPYT00000041679.1">
    <property type="protein sequence ID" value="ENSPPYP00000032698.1"/>
    <property type="gene ID" value="ENSPPYG00000015439.3"/>
</dbReference>
<dbReference type="GeneID" id="100174584"/>
<dbReference type="KEGG" id="pon:100174584"/>
<dbReference type="CTD" id="3157"/>
<dbReference type="eggNOG" id="KOG1393">
    <property type="taxonomic scope" value="Eukaryota"/>
</dbReference>
<dbReference type="GeneTree" id="ENSGT00390000006096"/>
<dbReference type="HOGENOM" id="CLU_008065_0_1_1"/>
<dbReference type="InParanoid" id="Q5R7Z9"/>
<dbReference type="OMA" id="DDAYNWI"/>
<dbReference type="OrthoDB" id="1269963at2759"/>
<dbReference type="TreeFam" id="TF105361"/>
<dbReference type="UniPathway" id="UPA00058">
    <property type="reaction ID" value="UER00102"/>
</dbReference>
<dbReference type="Proteomes" id="UP000001595">
    <property type="component" value="Chromosome 5"/>
</dbReference>
<dbReference type="GO" id="GO:0005737">
    <property type="term" value="C:cytoplasm"/>
    <property type="evidence" value="ECO:0007669"/>
    <property type="project" value="UniProtKB-SubCell"/>
</dbReference>
<dbReference type="GO" id="GO:0004421">
    <property type="term" value="F:hydroxymethylglutaryl-CoA synthase activity"/>
    <property type="evidence" value="ECO:0007669"/>
    <property type="project" value="UniProtKB-EC"/>
</dbReference>
<dbReference type="GO" id="GO:0042803">
    <property type="term" value="F:protein homodimerization activity"/>
    <property type="evidence" value="ECO:0000250"/>
    <property type="project" value="UniProtKB"/>
</dbReference>
<dbReference type="GO" id="GO:0006084">
    <property type="term" value="P:acetyl-CoA metabolic process"/>
    <property type="evidence" value="ECO:0007669"/>
    <property type="project" value="InterPro"/>
</dbReference>
<dbReference type="GO" id="GO:0006695">
    <property type="term" value="P:cholesterol biosynthetic process"/>
    <property type="evidence" value="ECO:0007669"/>
    <property type="project" value="UniProtKB-KW"/>
</dbReference>
<dbReference type="GO" id="GO:0010142">
    <property type="term" value="P:farnesyl diphosphate biosynthetic process, mevalonate pathway"/>
    <property type="evidence" value="ECO:0007669"/>
    <property type="project" value="InterPro"/>
</dbReference>
<dbReference type="CDD" id="cd00827">
    <property type="entry name" value="init_cond_enzymes"/>
    <property type="match status" value="1"/>
</dbReference>
<dbReference type="FunFam" id="3.40.47.10:FF:000008">
    <property type="entry name" value="3-hydroxy-3-methylglutaryl coenzyme A synthase"/>
    <property type="match status" value="1"/>
</dbReference>
<dbReference type="Gene3D" id="3.40.47.10">
    <property type="match status" value="1"/>
</dbReference>
<dbReference type="InterPro" id="IPR000590">
    <property type="entry name" value="HMG_CoA_synt_AS"/>
</dbReference>
<dbReference type="InterPro" id="IPR013746">
    <property type="entry name" value="HMG_CoA_synt_C_dom"/>
</dbReference>
<dbReference type="InterPro" id="IPR013528">
    <property type="entry name" value="HMG_CoA_synth_N"/>
</dbReference>
<dbReference type="InterPro" id="IPR010122">
    <property type="entry name" value="HMG_CoA_synthase_euk"/>
</dbReference>
<dbReference type="InterPro" id="IPR016039">
    <property type="entry name" value="Thiolase-like"/>
</dbReference>
<dbReference type="NCBIfam" id="TIGR01833">
    <property type="entry name" value="HMG-CoA-S_euk"/>
    <property type="match status" value="1"/>
</dbReference>
<dbReference type="PANTHER" id="PTHR43323">
    <property type="entry name" value="3-HYDROXY-3-METHYLGLUTARYL COENZYME A SYNTHASE"/>
    <property type="match status" value="1"/>
</dbReference>
<dbReference type="PANTHER" id="PTHR43323:SF4">
    <property type="entry name" value="HYDROXYMETHYLGLUTARYL-COA SYNTHASE, CYTOPLASMIC"/>
    <property type="match status" value="1"/>
</dbReference>
<dbReference type="Pfam" id="PF08540">
    <property type="entry name" value="HMG_CoA_synt_C"/>
    <property type="match status" value="1"/>
</dbReference>
<dbReference type="Pfam" id="PF01154">
    <property type="entry name" value="HMG_CoA_synt_N"/>
    <property type="match status" value="1"/>
</dbReference>
<dbReference type="SUPFAM" id="SSF53901">
    <property type="entry name" value="Thiolase-like"/>
    <property type="match status" value="2"/>
</dbReference>
<dbReference type="PROSITE" id="PS01226">
    <property type="entry name" value="HMG_COA_SYNTHASE"/>
    <property type="match status" value="1"/>
</dbReference>
<gene>
    <name evidence="3" type="primary">HMGCS1</name>
</gene>
<comment type="function">
    <text evidence="1">Catalyzes the condensation of acetyl-CoA with acetoacetyl-CoA to form HMG-CoA, which is converted by HMG-CoA reductase (HMGCR) into mevalonate, a precursor for cholesterol synthesis.</text>
</comment>
<comment type="catalytic activity">
    <reaction evidence="3">
        <text>acetoacetyl-CoA + acetyl-CoA + H2O = (3S)-3-hydroxy-3-methylglutaryl-CoA + CoA + H(+)</text>
        <dbReference type="Rhea" id="RHEA:10188"/>
        <dbReference type="ChEBI" id="CHEBI:15377"/>
        <dbReference type="ChEBI" id="CHEBI:15378"/>
        <dbReference type="ChEBI" id="CHEBI:43074"/>
        <dbReference type="ChEBI" id="CHEBI:57286"/>
        <dbReference type="ChEBI" id="CHEBI:57287"/>
        <dbReference type="ChEBI" id="CHEBI:57288"/>
        <dbReference type="EC" id="2.3.3.10"/>
    </reaction>
    <physiologicalReaction direction="left-to-right" evidence="3">
        <dbReference type="Rhea" id="RHEA:10189"/>
    </physiologicalReaction>
</comment>
<comment type="pathway">
    <text>Metabolic intermediate biosynthesis; (R)-mevalonate biosynthesis; (R)-mevalonate from acetyl-CoA: step 2/3.</text>
</comment>
<comment type="subunit">
    <text evidence="3">Homodimer.</text>
</comment>
<comment type="subcellular location">
    <subcellularLocation>
        <location evidence="1">Cytoplasm</location>
    </subcellularLocation>
</comment>
<comment type="similarity">
    <text evidence="6">Belongs to the thiolase-like superfamily. HMG-CoA synthase family.</text>
</comment>
<accession>Q5R7Z9</accession>
<reference key="1">
    <citation type="submission" date="2004-11" db="EMBL/GenBank/DDBJ databases">
        <authorList>
            <consortium name="The German cDNA consortium"/>
        </authorList>
    </citation>
    <scope>NUCLEOTIDE SEQUENCE [LARGE SCALE MRNA]</scope>
    <source>
        <tissue>Kidney</tissue>
    </source>
</reference>
<keyword id="KW-0007">Acetylation</keyword>
<keyword id="KW-0152">Cholesterol biosynthesis</keyword>
<keyword id="KW-0153">Cholesterol metabolism</keyword>
<keyword id="KW-0963">Cytoplasm</keyword>
<keyword id="KW-0444">Lipid biosynthesis</keyword>
<keyword id="KW-0443">Lipid metabolism</keyword>
<keyword id="KW-0597">Phosphoprotein</keyword>
<keyword id="KW-1185">Reference proteome</keyword>
<keyword id="KW-0752">Steroid biosynthesis</keyword>
<keyword id="KW-0753">Steroid metabolism</keyword>
<keyword id="KW-0756">Sterol biosynthesis</keyword>
<keyword id="KW-1207">Sterol metabolism</keyword>
<keyword id="KW-0808">Transferase</keyword>
<feature type="chain" id="PRO_0000213749" description="Hydroxymethylglutaryl-CoA synthase, cytoplasmic">
    <location>
        <begin position="1"/>
        <end position="520"/>
    </location>
</feature>
<feature type="region of interest" description="Disordered" evidence="5">
    <location>
        <begin position="492"/>
        <end position="520"/>
    </location>
</feature>
<feature type="active site" description="Proton donor/acceptor" evidence="4">
    <location>
        <position position="95"/>
    </location>
</feature>
<feature type="active site" description="Acyl-thioester intermediate" evidence="4">
    <location>
        <position position="129"/>
    </location>
</feature>
<feature type="active site" description="Proton donor/acceptor" evidence="4">
    <location>
        <position position="264"/>
    </location>
</feature>
<feature type="binding site" evidence="3">
    <location>
        <begin position="44"/>
        <end position="46"/>
    </location>
    <ligand>
        <name>CoA</name>
        <dbReference type="ChEBI" id="CHEBI:57287"/>
    </ligand>
</feature>
<feature type="binding site" evidence="2">
    <location>
        <position position="44"/>
    </location>
    <ligand>
        <name>(3S)-3-hydroxy-3-methylglutaryl-CoA</name>
        <dbReference type="ChEBI" id="CHEBI:43074"/>
    </ligand>
</feature>
<feature type="binding site" evidence="2">
    <location>
        <position position="129"/>
    </location>
    <ligand>
        <name>(3S)-3-hydroxy-3-methylglutaryl-CoA</name>
        <dbReference type="ChEBI" id="CHEBI:43074"/>
    </ligand>
</feature>
<feature type="binding site" evidence="2">
    <location>
        <position position="167"/>
    </location>
    <ligand>
        <name>(3S)-3-hydroxy-3-methylglutaryl-CoA</name>
        <dbReference type="ChEBI" id="CHEBI:43074"/>
    </ligand>
</feature>
<feature type="binding site" evidence="3">
    <location>
        <position position="167"/>
    </location>
    <ligand>
        <name>CoA</name>
        <dbReference type="ChEBI" id="CHEBI:57287"/>
    </ligand>
</feature>
<feature type="binding site" evidence="2">
    <location>
        <position position="171"/>
    </location>
    <ligand>
        <name>(3S)-3-hydroxy-3-methylglutaryl-CoA</name>
        <dbReference type="ChEBI" id="CHEBI:43074"/>
    </ligand>
</feature>
<feature type="binding site" evidence="2">
    <location>
        <position position="221"/>
    </location>
    <ligand>
        <name>(3S)-3-hydroxy-3-methylglutaryl-CoA</name>
        <dbReference type="ChEBI" id="CHEBI:43074"/>
    </ligand>
</feature>
<feature type="binding site" evidence="3">
    <location>
        <position position="221"/>
    </location>
    <ligand>
        <name>CoA</name>
        <dbReference type="ChEBI" id="CHEBI:57287"/>
    </ligand>
</feature>
<feature type="binding site" evidence="2">
    <location>
        <position position="264"/>
    </location>
    <ligand>
        <name>(3S)-3-hydroxy-3-methylglutaryl-CoA</name>
        <dbReference type="ChEBI" id="CHEBI:43074"/>
    </ligand>
</feature>
<feature type="binding site" evidence="3">
    <location>
        <position position="269"/>
    </location>
    <ligand>
        <name>CoA</name>
        <dbReference type="ChEBI" id="CHEBI:57287"/>
    </ligand>
</feature>
<feature type="binding site" evidence="2">
    <location>
        <position position="273"/>
    </location>
    <ligand>
        <name>(3S)-3-hydroxy-3-methylglutaryl-CoA</name>
        <dbReference type="ChEBI" id="CHEBI:43074"/>
    </ligand>
</feature>
<feature type="binding site" evidence="3">
    <location>
        <position position="273"/>
    </location>
    <ligand>
        <name>CoA</name>
        <dbReference type="ChEBI" id="CHEBI:57287"/>
    </ligand>
</feature>
<feature type="binding site" evidence="2">
    <location>
        <position position="343"/>
    </location>
    <ligand>
        <name>(3S)-3-hydroxy-3-methylglutaryl-CoA</name>
        <dbReference type="ChEBI" id="CHEBI:43074"/>
    </ligand>
</feature>
<feature type="binding site" evidence="2">
    <location>
        <position position="377"/>
    </location>
    <ligand>
        <name>(3S)-3-hydroxy-3-methylglutaryl-CoA</name>
        <dbReference type="ChEBI" id="CHEBI:43074"/>
    </ligand>
</feature>
<feature type="modified residue" description="Phosphoserine" evidence="3">
    <location>
        <position position="4"/>
    </location>
</feature>
<feature type="modified residue" description="N6-acetyllysine" evidence="3">
    <location>
        <position position="46"/>
    </location>
</feature>
<feature type="modified residue" description="N6-acetyllysine" evidence="3">
    <location>
        <position position="273"/>
    </location>
</feature>
<feature type="modified residue" description="Phosphothreonine" evidence="3">
    <location>
        <position position="476"/>
    </location>
</feature>
<feature type="modified residue" description="Phosphoserine" evidence="3">
    <location>
        <position position="495"/>
    </location>
</feature>
<feature type="modified residue" description="Phosphoserine" evidence="3">
    <location>
        <position position="516"/>
    </location>
</feature>
<sequence length="520" mass="57269">MPGSLPLNAEACWPKDVGIVALEIYFPSQYVDQAELEKYDGVAAGKYTIGLGQAKMGFCTDREDINSLCMTVVQNLMERNNLSYDCIGRLEVGTETIIDKSKSVKTNLMQLFEESGNTDIEGIDTTNACYGGTAAVFNAVNWIESSSWDGRYALVVAGDIAVYATGNARPTGGVGAVALLIGPNAPLIFERGLRGTHMQHAYDFYKPDMLSEYPIVDGKLSIQCYLSALDRCYSVYCKKIRAQWQKEGNDKDFTLNDFGFMIFHSPYCKLVQKSLARMLLNDFLNDQNRDKNSIYSGLEAFGDVKLEDTYFDRDVEKAFMKASSELFSQKTKASLLVSNQNGNMYTSSVYGSLASVLAQYSPQQLAGKRIGVFSYGSGLAATLYSLKVTQDATPGSALDKITASLCDLKSRLDSRTGVAPDVFAENMKLREDTHHLVNYIPQGSIDSLFEGTWYLVRVDEKHRRTYARRPTPNDDTLDEGVGLVHSNIATEHIPSPAKKVPRLPATAAEPEAAVISNGEH</sequence>
<proteinExistence type="evidence at transcript level"/>
<evidence type="ECO:0000250" key="1">
    <source>
        <dbReference type="UniProtKB" id="P13704"/>
    </source>
</evidence>
<evidence type="ECO:0000250" key="2">
    <source>
        <dbReference type="UniProtKB" id="P54868"/>
    </source>
</evidence>
<evidence type="ECO:0000250" key="3">
    <source>
        <dbReference type="UniProtKB" id="Q01581"/>
    </source>
</evidence>
<evidence type="ECO:0000255" key="4">
    <source>
        <dbReference type="PROSITE-ProRule" id="PRU10116"/>
    </source>
</evidence>
<evidence type="ECO:0000256" key="5">
    <source>
        <dbReference type="SAM" id="MobiDB-lite"/>
    </source>
</evidence>
<evidence type="ECO:0000305" key="6"/>
<organism>
    <name type="scientific">Pongo abelii</name>
    <name type="common">Sumatran orangutan</name>
    <name type="synonym">Pongo pygmaeus abelii</name>
    <dbReference type="NCBI Taxonomy" id="9601"/>
    <lineage>
        <taxon>Eukaryota</taxon>
        <taxon>Metazoa</taxon>
        <taxon>Chordata</taxon>
        <taxon>Craniata</taxon>
        <taxon>Vertebrata</taxon>
        <taxon>Euteleostomi</taxon>
        <taxon>Mammalia</taxon>
        <taxon>Eutheria</taxon>
        <taxon>Euarchontoglires</taxon>
        <taxon>Primates</taxon>
        <taxon>Haplorrhini</taxon>
        <taxon>Catarrhini</taxon>
        <taxon>Hominidae</taxon>
        <taxon>Pongo</taxon>
    </lineage>
</organism>